<evidence type="ECO:0000255" key="1">
    <source>
        <dbReference type="HAMAP-Rule" id="MF_01384"/>
    </source>
</evidence>
<proteinExistence type="inferred from homology"/>
<sequence>MSETDTIVKGWHGKLNLVYADRSNSTQLIYNHQQAPLKVQRPFYPEGEKVCHSVILHTAGGVVGGDRLSYNLHLQPNAQALITTAAAGKVYRSDGLQARQTIEIKIDAGACLEWLPQETILFNGAIYRQDLRVELATGANFLGWEITRFGRSARGEKFYQGEWRSHTEIWQQGVPLWIDRQWLPGNDAVFHSPHGLAGQPIVGSLVWLGSPISTEIIEKARNLGNTQGEAGVTSLENGFLCRYRGASTSEVRNWFTSVWQLLRGEFFSRGKCIPRVWQT</sequence>
<dbReference type="EMBL" id="BA000019">
    <property type="protein sequence ID" value="BAB75365.1"/>
    <property type="molecule type" value="Genomic_DNA"/>
</dbReference>
<dbReference type="PIR" id="AC2264">
    <property type="entry name" value="AC2264"/>
</dbReference>
<dbReference type="RefSeq" id="WP_010997810.1">
    <property type="nucleotide sequence ID" value="NZ_RSCN01000044.1"/>
</dbReference>
<dbReference type="SMR" id="Q8YQZ4"/>
<dbReference type="STRING" id="103690.gene:10495708"/>
<dbReference type="KEGG" id="ana:alr3666"/>
<dbReference type="eggNOG" id="COG0829">
    <property type="taxonomic scope" value="Bacteria"/>
</dbReference>
<dbReference type="OrthoDB" id="9798842at2"/>
<dbReference type="Proteomes" id="UP000002483">
    <property type="component" value="Chromosome"/>
</dbReference>
<dbReference type="GO" id="GO:0005737">
    <property type="term" value="C:cytoplasm"/>
    <property type="evidence" value="ECO:0007669"/>
    <property type="project" value="UniProtKB-SubCell"/>
</dbReference>
<dbReference type="GO" id="GO:0016151">
    <property type="term" value="F:nickel cation binding"/>
    <property type="evidence" value="ECO:0007669"/>
    <property type="project" value="UniProtKB-UniRule"/>
</dbReference>
<dbReference type="HAMAP" id="MF_01384">
    <property type="entry name" value="UreD"/>
    <property type="match status" value="1"/>
</dbReference>
<dbReference type="InterPro" id="IPR002669">
    <property type="entry name" value="UreD"/>
</dbReference>
<dbReference type="PANTHER" id="PTHR33643">
    <property type="entry name" value="UREASE ACCESSORY PROTEIN D"/>
    <property type="match status" value="1"/>
</dbReference>
<dbReference type="PANTHER" id="PTHR33643:SF1">
    <property type="entry name" value="UREASE ACCESSORY PROTEIN D"/>
    <property type="match status" value="1"/>
</dbReference>
<dbReference type="Pfam" id="PF01774">
    <property type="entry name" value="UreD"/>
    <property type="match status" value="1"/>
</dbReference>
<gene>
    <name evidence="1" type="primary">ureD</name>
    <name type="ordered locus">alr3666</name>
</gene>
<keyword id="KW-0143">Chaperone</keyword>
<keyword id="KW-0963">Cytoplasm</keyword>
<keyword id="KW-0996">Nickel insertion</keyword>
<keyword id="KW-1185">Reference proteome</keyword>
<feature type="chain" id="PRO_0000340406" description="Urease accessory protein UreD">
    <location>
        <begin position="1"/>
        <end position="279"/>
    </location>
</feature>
<protein>
    <recommendedName>
        <fullName evidence="1">Urease accessory protein UreD</fullName>
    </recommendedName>
</protein>
<comment type="function">
    <text evidence="1">Required for maturation of urease via the functional incorporation of the urease nickel metallocenter.</text>
</comment>
<comment type="subunit">
    <text evidence="1">UreD, UreF and UreG form a complex that acts as a GTP-hydrolysis-dependent molecular chaperone, activating the urease apoprotein by helping to assemble the nickel containing metallocenter of UreC. The UreE protein probably delivers the nickel.</text>
</comment>
<comment type="subcellular location">
    <subcellularLocation>
        <location evidence="1">Cytoplasm</location>
    </subcellularLocation>
</comment>
<comment type="similarity">
    <text evidence="1">Belongs to the UreD family.</text>
</comment>
<reference key="1">
    <citation type="journal article" date="2001" name="DNA Res.">
        <title>Complete genomic sequence of the filamentous nitrogen-fixing cyanobacterium Anabaena sp. strain PCC 7120.</title>
        <authorList>
            <person name="Kaneko T."/>
            <person name="Nakamura Y."/>
            <person name="Wolk C.P."/>
            <person name="Kuritz T."/>
            <person name="Sasamoto S."/>
            <person name="Watanabe A."/>
            <person name="Iriguchi M."/>
            <person name="Ishikawa A."/>
            <person name="Kawashima K."/>
            <person name="Kimura T."/>
            <person name="Kishida Y."/>
            <person name="Kohara M."/>
            <person name="Matsumoto M."/>
            <person name="Matsuno A."/>
            <person name="Muraki A."/>
            <person name="Nakazaki N."/>
            <person name="Shimpo S."/>
            <person name="Sugimoto M."/>
            <person name="Takazawa M."/>
            <person name="Yamada M."/>
            <person name="Yasuda M."/>
            <person name="Tabata S."/>
        </authorList>
    </citation>
    <scope>NUCLEOTIDE SEQUENCE [LARGE SCALE GENOMIC DNA]</scope>
    <source>
        <strain>PCC 7120 / SAG 25.82 / UTEX 2576</strain>
    </source>
</reference>
<organism>
    <name type="scientific">Nostoc sp. (strain PCC 7120 / SAG 25.82 / UTEX 2576)</name>
    <dbReference type="NCBI Taxonomy" id="103690"/>
    <lineage>
        <taxon>Bacteria</taxon>
        <taxon>Bacillati</taxon>
        <taxon>Cyanobacteriota</taxon>
        <taxon>Cyanophyceae</taxon>
        <taxon>Nostocales</taxon>
        <taxon>Nostocaceae</taxon>
        <taxon>Nostoc</taxon>
    </lineage>
</organism>
<name>URED_NOSS1</name>
<accession>Q8YQZ4</accession>